<dbReference type="EC" id="1.14.19.20" evidence="9"/>
<dbReference type="EMBL" id="CU329670">
    <property type="protein sequence ID" value="CAA22610.1"/>
    <property type="molecule type" value="Genomic_DNA"/>
</dbReference>
<dbReference type="EMBL" id="AB027881">
    <property type="protein sequence ID" value="BAA87185.1"/>
    <property type="molecule type" value="Genomic_DNA"/>
</dbReference>
<dbReference type="PIR" id="T37759">
    <property type="entry name" value="T37759"/>
</dbReference>
<dbReference type="RefSeq" id="NP_593135.1">
    <property type="nucleotide sequence ID" value="NM_001018531.2"/>
</dbReference>
<dbReference type="BioGRID" id="278585">
    <property type="interactions" value="33"/>
</dbReference>
<dbReference type="FunCoup" id="O94457">
    <property type="interactions" value="129"/>
</dbReference>
<dbReference type="STRING" id="284812.O94457"/>
<dbReference type="PaxDb" id="4896-SPAC1687.16c.1"/>
<dbReference type="EnsemblFungi" id="SPAC1687.16c.1">
    <property type="protein sequence ID" value="SPAC1687.16c.1:pep"/>
    <property type="gene ID" value="SPAC1687.16c"/>
</dbReference>
<dbReference type="GeneID" id="2542109"/>
<dbReference type="KEGG" id="spo:2542109"/>
<dbReference type="PomBase" id="SPAC1687.16c">
    <property type="gene designation" value="erg31"/>
</dbReference>
<dbReference type="VEuPathDB" id="FungiDB:SPAC1687.16c"/>
<dbReference type="eggNOG" id="KOG0872">
    <property type="taxonomic scope" value="Eukaryota"/>
</dbReference>
<dbReference type="HOGENOM" id="CLU_047036_3_0_1"/>
<dbReference type="InParanoid" id="O94457"/>
<dbReference type="OMA" id="ICTPYAS"/>
<dbReference type="PhylomeDB" id="O94457"/>
<dbReference type="UniPathway" id="UPA00768"/>
<dbReference type="PRO" id="PR:O94457"/>
<dbReference type="Proteomes" id="UP000002485">
    <property type="component" value="Chromosome I"/>
</dbReference>
<dbReference type="GO" id="GO:0005783">
    <property type="term" value="C:endoplasmic reticulum"/>
    <property type="evidence" value="ECO:0007005"/>
    <property type="project" value="PomBase"/>
</dbReference>
<dbReference type="GO" id="GO:0005789">
    <property type="term" value="C:endoplasmic reticulum membrane"/>
    <property type="evidence" value="ECO:0000250"/>
    <property type="project" value="PomBase"/>
</dbReference>
<dbReference type="GO" id="GO:0005794">
    <property type="term" value="C:Golgi apparatus"/>
    <property type="evidence" value="ECO:0007005"/>
    <property type="project" value="PomBase"/>
</dbReference>
<dbReference type="GO" id="GO:0016020">
    <property type="term" value="C:membrane"/>
    <property type="evidence" value="ECO:0000318"/>
    <property type="project" value="GO_Central"/>
</dbReference>
<dbReference type="GO" id="GO:0000248">
    <property type="term" value="F:C-5 sterol desaturase activity"/>
    <property type="evidence" value="ECO:0000318"/>
    <property type="project" value="GO_Central"/>
</dbReference>
<dbReference type="GO" id="GO:0050046">
    <property type="term" value="F:delta7-sterol 5(6)-desaturase activity"/>
    <property type="evidence" value="ECO:0007669"/>
    <property type="project" value="UniProtKB-EC"/>
</dbReference>
<dbReference type="GO" id="GO:0005506">
    <property type="term" value="F:iron ion binding"/>
    <property type="evidence" value="ECO:0000255"/>
    <property type="project" value="PomBase"/>
</dbReference>
<dbReference type="GO" id="GO:0006696">
    <property type="term" value="P:ergosterol biosynthetic process"/>
    <property type="evidence" value="ECO:0000316"/>
    <property type="project" value="PomBase"/>
</dbReference>
<dbReference type="GO" id="GO:0016126">
    <property type="term" value="P:sterol biosynthetic process"/>
    <property type="evidence" value="ECO:0000318"/>
    <property type="project" value="GO_Central"/>
</dbReference>
<dbReference type="InterPro" id="IPR006694">
    <property type="entry name" value="Fatty_acid_hydroxylase"/>
</dbReference>
<dbReference type="InterPro" id="IPR050307">
    <property type="entry name" value="Sterol_Desaturase_Related"/>
</dbReference>
<dbReference type="PANTHER" id="PTHR11863">
    <property type="entry name" value="STEROL DESATURASE"/>
    <property type="match status" value="1"/>
</dbReference>
<dbReference type="Pfam" id="PF04116">
    <property type="entry name" value="FA_hydroxylase"/>
    <property type="match status" value="1"/>
</dbReference>
<comment type="function">
    <text evidence="1 5 9 10">C-5 sterol desaturase; part of the third module of ergosterol biosynthesis pathway that includes by the late steps of the pathway (PubMed:18310029). Erg31 and erg32 catalyze the introduction of a C-5 double bond in the B ring to produce 5-dehydroepisterol (By similarity). The third module or late pathway involves the ergosterol synthesis itself through consecutive reactions that mainly occur in the endoplasmic reticulum (ER) membrane. Firstly, the squalene synthase erg9 catalyzes the condensation of 2 farnesyl pyrophosphate moieties to form squalene, which is the precursor of all steroids. Secondly, squalene is converted into lanosterol by the consecutive action of the squalene epoxidase erg1 and the lanosterol synthase erg7. The lanosterol 14-alpha-demethylase erg11/cyp1 catalyzes C14-demethylation of lanosterol to produce 4,4'-dimethyl cholesta-8,14,24-triene-3-beta-ol. In the next steps, a complex process involving various demethylation, reduction and desaturation reactions catalyzed by the C-14 reductase erg24 and the C-4 demethylation complex erg25-erg26-erg27 leads to the production of zymosterol. Erg28 likely functions in the C-4 demethylation complex reaction by tethering erg26 and Erg27 to the endoplasmic reticulum or to facilitate interaction between these proteins. Then, the sterol 24-C-methyltransferase erg6 catalyzes the methyl transfer from S-adenosyl-methionine to the C-24 of zymosterol to form fecosterol. The C-8 sterol isomerase erg2 catalyzes the reaction which results in unsaturation at C-7 in the B ring of sterols and thus converts fecosterol to episterol. The sterol-C5-desaturases erg31 and erg32 then catalyze the introduction of a C-5 double bond in the B ring to produce 5-dehydroepisterol. The C-22 sterol desaturase erg5 further converts 5-dehydroepisterol into ergosta-5,7,22,24(28)-tetraen-3beta-ol by forming the C-22(23) double bond in the sterol side chain. Finally, ergosta-5,7,22,24(28)-tetraen-3beta-ol is substrate of the C-24(28) sterol reductase erg4 to produce ergosterol (Probable) (PubMed:18310029). In the genus Schizosaccharomyces, a second route exists between lanosterol and fecosterol, via the methylation of lanosterol to eburicol by erg6, followed by C14-demethylation by erg11/cyp1 and C4-demethylation by the demethylation complex erg25-erg26-erg27 (Probable) (PubMed:8586261).</text>
</comment>
<comment type="catalytic activity">
    <reaction evidence="9">
        <text>episterol + 2 Fe(II)-[cytochrome b5] + O2 + 2 H(+) = 5-dehydroepisterol + 2 Fe(III)-[cytochrome b5] + 2 H2O</text>
        <dbReference type="Rhea" id="RHEA:46560"/>
        <dbReference type="Rhea" id="RHEA-COMP:10438"/>
        <dbReference type="Rhea" id="RHEA-COMP:10439"/>
        <dbReference type="ChEBI" id="CHEBI:15377"/>
        <dbReference type="ChEBI" id="CHEBI:15378"/>
        <dbReference type="ChEBI" id="CHEBI:15379"/>
        <dbReference type="ChEBI" id="CHEBI:23929"/>
        <dbReference type="ChEBI" id="CHEBI:29033"/>
        <dbReference type="ChEBI" id="CHEBI:29034"/>
        <dbReference type="ChEBI" id="CHEBI:52972"/>
        <dbReference type="EC" id="1.14.19.20"/>
    </reaction>
    <physiologicalReaction direction="left-to-right" evidence="9">
        <dbReference type="Rhea" id="RHEA:46561"/>
    </physiologicalReaction>
</comment>
<comment type="cofactor">
    <cofactor evidence="2">
        <name>Fe cation</name>
        <dbReference type="ChEBI" id="CHEBI:24875"/>
    </cofactor>
</comment>
<comment type="pathway">
    <text evidence="5">Steroid metabolism; ergosterol biosynthesis.</text>
</comment>
<comment type="subcellular location">
    <subcellularLocation>
        <location evidence="8">Endoplasmic reticulum membrane</location>
        <topology evidence="3">Multi-pass membrane protein</topology>
    </subcellularLocation>
</comment>
<comment type="induction">
    <text evidence="4">Expression is anaerobically up-regulated via the sterol regulatory element binding protein sre1.</text>
</comment>
<comment type="domain">
    <text evidence="2">The histidine box domains may contain the active site and/or be involved in metal ion binding.</text>
</comment>
<comment type="disruption phenotype">
    <text evidence="5">Abolishes the production of ergosterol when erg32 is also deleted (PubMed:18310029). The double disruptant also leads to susceptibility to cycloheximide and to staurosporine, but does not affect tolerance to nystatin and to amphotericin B (PubMed:18310029).</text>
</comment>
<comment type="miscellaneous">
    <text evidence="6">In Aspergillus, the biosynthesis pathway of the sterol precursors leading to the prevalent sterol ergosterol differs from yeast. The ringsystem of lanosterol in S.cerevisiae is firstly demethylised in three enzymatic steps leading to the intermediate zymosterol and secondly a methyl group is added to zymosterol by the sterol 24-C-methyltransferase to form fecosterol. In Aspergillus, lanosterol is firstly transmethylated by the sterol 24-C-methyltransferase leading to the intermediate eburicol and secondly demethylated in three steps to form fecosterol. In the genus Schizosaccharomyces, 2 routes exist from lanosterol to erposterol: the classical one via zymosterol and the second one via the formation of eburicol followed by demethylation.</text>
</comment>
<comment type="similarity">
    <text evidence="8">Belongs to the sterol desaturase family.</text>
</comment>
<accession>O94457</accession>
<accession>Q9UU10</accession>
<name>ERG3A_SCHPO</name>
<proteinExistence type="evidence at transcript level"/>
<reference key="1">
    <citation type="journal article" date="2002" name="Nature">
        <title>The genome sequence of Schizosaccharomyces pombe.</title>
        <authorList>
            <person name="Wood V."/>
            <person name="Gwilliam R."/>
            <person name="Rajandream M.A."/>
            <person name="Lyne M.H."/>
            <person name="Lyne R."/>
            <person name="Stewart A."/>
            <person name="Sgouros J.G."/>
            <person name="Peat N."/>
            <person name="Hayles J."/>
            <person name="Baker S.G."/>
            <person name="Basham D."/>
            <person name="Bowman S."/>
            <person name="Brooks K."/>
            <person name="Brown D."/>
            <person name="Brown S."/>
            <person name="Chillingworth T."/>
            <person name="Churcher C.M."/>
            <person name="Collins M."/>
            <person name="Connor R."/>
            <person name="Cronin A."/>
            <person name="Davis P."/>
            <person name="Feltwell T."/>
            <person name="Fraser A."/>
            <person name="Gentles S."/>
            <person name="Goble A."/>
            <person name="Hamlin N."/>
            <person name="Harris D.E."/>
            <person name="Hidalgo J."/>
            <person name="Hodgson G."/>
            <person name="Holroyd S."/>
            <person name="Hornsby T."/>
            <person name="Howarth S."/>
            <person name="Huckle E.J."/>
            <person name="Hunt S."/>
            <person name="Jagels K."/>
            <person name="James K.D."/>
            <person name="Jones L."/>
            <person name="Jones M."/>
            <person name="Leather S."/>
            <person name="McDonald S."/>
            <person name="McLean J."/>
            <person name="Mooney P."/>
            <person name="Moule S."/>
            <person name="Mungall K.L."/>
            <person name="Murphy L.D."/>
            <person name="Niblett D."/>
            <person name="Odell C."/>
            <person name="Oliver K."/>
            <person name="O'Neil S."/>
            <person name="Pearson D."/>
            <person name="Quail M.A."/>
            <person name="Rabbinowitsch E."/>
            <person name="Rutherford K.M."/>
            <person name="Rutter S."/>
            <person name="Saunders D."/>
            <person name="Seeger K."/>
            <person name="Sharp S."/>
            <person name="Skelton J."/>
            <person name="Simmonds M.N."/>
            <person name="Squares R."/>
            <person name="Squares S."/>
            <person name="Stevens K."/>
            <person name="Taylor K."/>
            <person name="Taylor R.G."/>
            <person name="Tivey A."/>
            <person name="Walsh S.V."/>
            <person name="Warren T."/>
            <person name="Whitehead S."/>
            <person name="Woodward J.R."/>
            <person name="Volckaert G."/>
            <person name="Aert R."/>
            <person name="Robben J."/>
            <person name="Grymonprez B."/>
            <person name="Weltjens I."/>
            <person name="Vanstreels E."/>
            <person name="Rieger M."/>
            <person name="Schaefer M."/>
            <person name="Mueller-Auer S."/>
            <person name="Gabel C."/>
            <person name="Fuchs M."/>
            <person name="Duesterhoeft A."/>
            <person name="Fritzc C."/>
            <person name="Holzer E."/>
            <person name="Moestl D."/>
            <person name="Hilbert H."/>
            <person name="Borzym K."/>
            <person name="Langer I."/>
            <person name="Beck A."/>
            <person name="Lehrach H."/>
            <person name="Reinhardt R."/>
            <person name="Pohl T.M."/>
            <person name="Eger P."/>
            <person name="Zimmermann W."/>
            <person name="Wedler H."/>
            <person name="Wambutt R."/>
            <person name="Purnelle B."/>
            <person name="Goffeau A."/>
            <person name="Cadieu E."/>
            <person name="Dreano S."/>
            <person name="Gloux S."/>
            <person name="Lelaure V."/>
            <person name="Mottier S."/>
            <person name="Galibert F."/>
            <person name="Aves S.J."/>
            <person name="Xiang Z."/>
            <person name="Hunt C."/>
            <person name="Moore K."/>
            <person name="Hurst S.M."/>
            <person name="Lucas M."/>
            <person name="Rochet M."/>
            <person name="Gaillardin C."/>
            <person name="Tallada V.A."/>
            <person name="Garzon A."/>
            <person name="Thode G."/>
            <person name="Daga R.R."/>
            <person name="Cruzado L."/>
            <person name="Jimenez J."/>
            <person name="Sanchez M."/>
            <person name="del Rey F."/>
            <person name="Benito J."/>
            <person name="Dominguez A."/>
            <person name="Revuelta J.L."/>
            <person name="Moreno S."/>
            <person name="Armstrong J."/>
            <person name="Forsburg S.L."/>
            <person name="Cerutti L."/>
            <person name="Lowe T."/>
            <person name="McCombie W.R."/>
            <person name="Paulsen I."/>
            <person name="Potashkin J."/>
            <person name="Shpakovski G.V."/>
            <person name="Ussery D."/>
            <person name="Barrell B.G."/>
            <person name="Nurse P."/>
        </authorList>
    </citation>
    <scope>NUCLEOTIDE SEQUENCE [LARGE SCALE GENOMIC DNA]</scope>
    <source>
        <strain>972 / ATCC 24843</strain>
    </source>
</reference>
<reference key="2">
    <citation type="journal article" date="2000" name="Genes Cells">
        <title>Large-scale screening of intracellular protein localization in living fission yeast cells by the use of a GFP-fusion genomic DNA library.</title>
        <authorList>
            <person name="Ding D.-Q."/>
            <person name="Tomita Y."/>
            <person name="Yamamoto A."/>
            <person name="Chikashige Y."/>
            <person name="Haraguchi T."/>
            <person name="Hiraoka Y."/>
        </authorList>
    </citation>
    <scope>NUCLEOTIDE SEQUENCE [LARGE SCALE GENOMIC DNA] OF 147-261</scope>
    <scope>SUBCELLULAR LOCATION</scope>
    <source>
        <strain>ATCC 38364 / 968</strain>
    </source>
</reference>
<reference key="3">
    <citation type="journal article" date="1995" name="FEMS Microbiol. Lett.">
        <title>Identification of 24-methylene-24,25-dihydrolanosterol as a precursor of ergosterol in the yeasts Schizosaccharomyces pombe and Schizosaccharomyces octosporus.</title>
        <authorList>
            <person name="Harmouch N."/>
            <person name="Coulon J."/>
            <person name="Bonaly R."/>
        </authorList>
    </citation>
    <scope>FUNCTION</scope>
</reference>
<reference key="4">
    <citation type="journal article" date="2006" name="Mol. Cell. Biol.">
        <title>Sterol regulatory element binding protein is a principal regulator of anaerobic gene expression in fission yeast.</title>
        <authorList>
            <person name="Todd B.L."/>
            <person name="Stewart E.V."/>
            <person name="Burg J.S."/>
            <person name="Hughes A.L."/>
            <person name="Espenshade P.J."/>
        </authorList>
    </citation>
    <scope>INDUCTION</scope>
</reference>
<reference key="5">
    <citation type="journal article" date="2006" name="Nat. Biotechnol.">
        <title>ORFeome cloning and global analysis of protein localization in the fission yeast Schizosaccharomyces pombe.</title>
        <authorList>
            <person name="Matsuyama A."/>
            <person name="Arai R."/>
            <person name="Yashiroda Y."/>
            <person name="Shirai A."/>
            <person name="Kamata A."/>
            <person name="Sekido S."/>
            <person name="Kobayashi Y."/>
            <person name="Hashimoto A."/>
            <person name="Hamamoto M."/>
            <person name="Hiraoka Y."/>
            <person name="Horinouchi S."/>
            <person name="Yoshida M."/>
        </authorList>
    </citation>
    <scope>SUBCELLULAR LOCATION [LARGE SCALE ANALYSIS]</scope>
</reference>
<reference key="6">
    <citation type="journal article" date="2008" name="Microbiology">
        <title>Multiple functions of ergosterol in the fission yeast Schizosaccharomyces pombe.</title>
        <authorList>
            <person name="Iwaki T."/>
            <person name="Iefuji H."/>
            <person name="Hiraga Y."/>
            <person name="Hosomi A."/>
            <person name="Morita T."/>
            <person name="Giga-Hama Y."/>
            <person name="Takegawa K."/>
        </authorList>
    </citation>
    <scope>FUNCTION</scope>
    <scope>DISRUPTION PHENOTYPE</scope>
    <scope>PATHWAY</scope>
</reference>
<sequence>MDYLLNYADQYALDSIYNAVYPLARDNIVRQSISLFFLTWFGGMFLYLTFASLSYQFVFDKSLMDHPKFLKNQVFMEVLTALQNLPGMALLTVPWFLAELHGYSYLYDNISDYGLKYFLCSLPLFVMFSDFGIYWAHRFLHHRYVYPRLHKLHHKWIICTPYASHAFKSADGFLQSLPYHLFPFFFPLHKLTYLALFTFVNFWSIMIHDGKYISNNPIINGAAHHNGHHIYFNYNYGQFTTLFDRLGNSFRAPDEAWFDKDLRQNEDVLRVELMEYEAIRNEVEGDDDREYIANSAKKNH</sequence>
<evidence type="ECO:0000250" key="1">
    <source>
        <dbReference type="UniProtKB" id="P32353"/>
    </source>
</evidence>
<evidence type="ECO:0000250" key="2">
    <source>
        <dbReference type="UniProtKB" id="P53045"/>
    </source>
</evidence>
<evidence type="ECO:0000255" key="3"/>
<evidence type="ECO:0000269" key="4">
    <source>
    </source>
</evidence>
<evidence type="ECO:0000269" key="5">
    <source>
    </source>
</evidence>
<evidence type="ECO:0000269" key="6">
    <source>
    </source>
</evidence>
<evidence type="ECO:0000303" key="7">
    <source>
    </source>
</evidence>
<evidence type="ECO:0000305" key="8"/>
<evidence type="ECO:0000305" key="9">
    <source>
    </source>
</evidence>
<evidence type="ECO:0000305" key="10">
    <source>
    </source>
</evidence>
<keyword id="KW-0256">Endoplasmic reticulum</keyword>
<keyword id="KW-0408">Iron</keyword>
<keyword id="KW-0444">Lipid biosynthesis</keyword>
<keyword id="KW-0443">Lipid metabolism</keyword>
<keyword id="KW-0472">Membrane</keyword>
<keyword id="KW-0560">Oxidoreductase</keyword>
<keyword id="KW-1185">Reference proteome</keyword>
<keyword id="KW-0752">Steroid biosynthesis</keyword>
<keyword id="KW-0753">Steroid metabolism</keyword>
<keyword id="KW-0756">Sterol biosynthesis</keyword>
<keyword id="KW-1207">Sterol metabolism</keyword>
<keyword id="KW-0812">Transmembrane</keyword>
<keyword id="KW-1133">Transmembrane helix</keyword>
<gene>
    <name evidence="7" type="primary">erg31</name>
    <name type="synonym">erg3</name>
    <name type="ORF">SPAC1687.16c</name>
</gene>
<feature type="chain" id="PRO_0000117025" description="Delta(7)-sterol 5(6)-desaturase erg31">
    <location>
        <begin position="1"/>
        <end position="300"/>
    </location>
</feature>
<feature type="transmembrane region" description="Helical" evidence="3">
    <location>
        <begin position="33"/>
        <end position="53"/>
    </location>
</feature>
<feature type="transmembrane region" description="Helical" evidence="3">
    <location>
        <begin position="78"/>
        <end position="98"/>
    </location>
</feature>
<feature type="transmembrane region" description="Helical" evidence="3">
    <location>
        <begin position="117"/>
        <end position="137"/>
    </location>
</feature>
<feature type="transmembrane region" description="Helical" evidence="3">
    <location>
        <begin position="180"/>
        <end position="200"/>
    </location>
</feature>
<feature type="domain" description="Fatty acid hydroxylase" evidence="3">
    <location>
        <begin position="123"/>
        <end position="248"/>
    </location>
</feature>
<feature type="short sequence motif" description="Histidine box-1">
    <location>
        <begin position="137"/>
        <end position="141"/>
    </location>
</feature>
<feature type="short sequence motif" description="Histidine box-2">
    <location>
        <begin position="150"/>
        <end position="154"/>
    </location>
</feature>
<feature type="short sequence motif" description="Histidine box-3">
    <location>
        <begin position="225"/>
        <end position="229"/>
    </location>
</feature>
<protein>
    <recommendedName>
        <fullName evidence="7">Delta(7)-sterol 5(6)-desaturase erg31</fullName>
        <ecNumber evidence="9">1.14.19.20</ecNumber>
    </recommendedName>
    <alternativeName>
        <fullName evidence="7">C-5 sterol desaturase erg31</fullName>
    </alternativeName>
    <alternativeName>
        <fullName evidence="8">Ergosterol Delta(5,6) desaturase erg31</fullName>
    </alternativeName>
    <alternativeName>
        <fullName evidence="7">Ergosterol biosynthetic protein 31</fullName>
    </alternativeName>
    <alternativeName>
        <fullName evidence="7">Sterol-C5-desaturase erg31</fullName>
    </alternativeName>
</protein>
<organism>
    <name type="scientific">Schizosaccharomyces pombe (strain 972 / ATCC 24843)</name>
    <name type="common">Fission yeast</name>
    <dbReference type="NCBI Taxonomy" id="284812"/>
    <lineage>
        <taxon>Eukaryota</taxon>
        <taxon>Fungi</taxon>
        <taxon>Dikarya</taxon>
        <taxon>Ascomycota</taxon>
        <taxon>Taphrinomycotina</taxon>
        <taxon>Schizosaccharomycetes</taxon>
        <taxon>Schizosaccharomycetales</taxon>
        <taxon>Schizosaccharomycetaceae</taxon>
        <taxon>Schizosaccharomyces</taxon>
    </lineage>
</organism>